<proteinExistence type="inferred from homology"/>
<geneLocation type="chloroplast"/>
<gene>
    <name evidence="2" type="primary">accD</name>
</gene>
<feature type="chain" id="PRO_0000359131" description="Acetyl-coenzyme A carboxylase carboxyl transferase subunit beta, chloroplastic">
    <location>
        <begin position="1"/>
        <end position="492"/>
    </location>
</feature>
<feature type="domain" description="CoA carboxyltransferase N-terminal" evidence="3">
    <location>
        <begin position="228"/>
        <end position="492"/>
    </location>
</feature>
<feature type="zinc finger region" description="C4-type" evidence="2">
    <location>
        <begin position="232"/>
        <end position="254"/>
    </location>
</feature>
<feature type="region of interest" description="Disordered" evidence="4">
    <location>
        <begin position="198"/>
        <end position="219"/>
    </location>
</feature>
<feature type="binding site" evidence="2">
    <location>
        <position position="232"/>
    </location>
    <ligand>
        <name>Zn(2+)</name>
        <dbReference type="ChEBI" id="CHEBI:29105"/>
    </ligand>
</feature>
<feature type="binding site" evidence="2">
    <location>
        <position position="235"/>
    </location>
    <ligand>
        <name>Zn(2+)</name>
        <dbReference type="ChEBI" id="CHEBI:29105"/>
    </ligand>
</feature>
<feature type="binding site" evidence="2">
    <location>
        <position position="251"/>
    </location>
    <ligand>
        <name>Zn(2+)</name>
        <dbReference type="ChEBI" id="CHEBI:29105"/>
    </ligand>
</feature>
<feature type="binding site" evidence="2">
    <location>
        <position position="254"/>
    </location>
    <ligand>
        <name>Zn(2+)</name>
        <dbReference type="ChEBI" id="CHEBI:29105"/>
    </ligand>
</feature>
<dbReference type="EC" id="2.1.3.15" evidence="2"/>
<dbReference type="EMBL" id="DQ864733">
    <property type="protein sequence ID" value="ABI49029.1"/>
    <property type="molecule type" value="Genomic_DNA"/>
</dbReference>
<dbReference type="RefSeq" id="YP_740484.1">
    <property type="nucleotide sequence ID" value="NC_008334.1"/>
</dbReference>
<dbReference type="SMR" id="Q09MG9"/>
<dbReference type="GeneID" id="4271214"/>
<dbReference type="KEGG" id="cit:4271214"/>
<dbReference type="OrthoDB" id="842067at71240"/>
<dbReference type="UniPathway" id="UPA00655">
    <property type="reaction ID" value="UER00711"/>
</dbReference>
<dbReference type="GO" id="GO:0009317">
    <property type="term" value="C:acetyl-CoA carboxylase complex"/>
    <property type="evidence" value="ECO:0007669"/>
    <property type="project" value="InterPro"/>
</dbReference>
<dbReference type="GO" id="GO:0009570">
    <property type="term" value="C:chloroplast stroma"/>
    <property type="evidence" value="ECO:0007669"/>
    <property type="project" value="UniProtKB-SubCell"/>
</dbReference>
<dbReference type="GO" id="GO:0003989">
    <property type="term" value="F:acetyl-CoA carboxylase activity"/>
    <property type="evidence" value="ECO:0007669"/>
    <property type="project" value="InterPro"/>
</dbReference>
<dbReference type="GO" id="GO:0005524">
    <property type="term" value="F:ATP binding"/>
    <property type="evidence" value="ECO:0007669"/>
    <property type="project" value="UniProtKB-KW"/>
</dbReference>
<dbReference type="GO" id="GO:0016743">
    <property type="term" value="F:carboxyl- or carbamoyltransferase activity"/>
    <property type="evidence" value="ECO:0007669"/>
    <property type="project" value="UniProtKB-UniRule"/>
</dbReference>
<dbReference type="GO" id="GO:0008270">
    <property type="term" value="F:zinc ion binding"/>
    <property type="evidence" value="ECO:0007669"/>
    <property type="project" value="UniProtKB-UniRule"/>
</dbReference>
<dbReference type="GO" id="GO:0006633">
    <property type="term" value="P:fatty acid biosynthetic process"/>
    <property type="evidence" value="ECO:0007669"/>
    <property type="project" value="UniProtKB-KW"/>
</dbReference>
<dbReference type="GO" id="GO:2001295">
    <property type="term" value="P:malonyl-CoA biosynthetic process"/>
    <property type="evidence" value="ECO:0007669"/>
    <property type="project" value="UniProtKB-UniRule"/>
</dbReference>
<dbReference type="Gene3D" id="3.90.226.10">
    <property type="entry name" value="2-enoyl-CoA Hydratase, Chain A, domain 1"/>
    <property type="match status" value="1"/>
</dbReference>
<dbReference type="HAMAP" id="MF_01395">
    <property type="entry name" value="AcetylCoA_CT_beta"/>
    <property type="match status" value="1"/>
</dbReference>
<dbReference type="InterPro" id="IPR034733">
    <property type="entry name" value="AcCoA_carboxyl_beta"/>
</dbReference>
<dbReference type="InterPro" id="IPR000438">
    <property type="entry name" value="Acetyl_CoA_COase_Trfase_b_su"/>
</dbReference>
<dbReference type="InterPro" id="IPR029045">
    <property type="entry name" value="ClpP/crotonase-like_dom_sf"/>
</dbReference>
<dbReference type="InterPro" id="IPR011762">
    <property type="entry name" value="COA_CT_N"/>
</dbReference>
<dbReference type="NCBIfam" id="TIGR00515">
    <property type="entry name" value="accD"/>
    <property type="match status" value="1"/>
</dbReference>
<dbReference type="PANTHER" id="PTHR42995">
    <property type="entry name" value="ACETYL-COENZYME A CARBOXYLASE CARBOXYL TRANSFERASE SUBUNIT BETA, CHLOROPLASTIC"/>
    <property type="match status" value="1"/>
</dbReference>
<dbReference type="PANTHER" id="PTHR42995:SF5">
    <property type="entry name" value="ACETYL-COENZYME A CARBOXYLASE CARBOXYL TRANSFERASE SUBUNIT BETA, CHLOROPLASTIC"/>
    <property type="match status" value="1"/>
</dbReference>
<dbReference type="Pfam" id="PF01039">
    <property type="entry name" value="Carboxyl_trans"/>
    <property type="match status" value="1"/>
</dbReference>
<dbReference type="PRINTS" id="PR01070">
    <property type="entry name" value="ACCCTRFRASEB"/>
</dbReference>
<dbReference type="SUPFAM" id="SSF52096">
    <property type="entry name" value="ClpP/crotonase"/>
    <property type="match status" value="1"/>
</dbReference>
<dbReference type="PROSITE" id="PS50980">
    <property type="entry name" value="COA_CT_NTER"/>
    <property type="match status" value="1"/>
</dbReference>
<organism>
    <name type="scientific">Citrus sinensis</name>
    <name type="common">Sweet orange</name>
    <name type="synonym">Citrus aurantium var. sinensis</name>
    <dbReference type="NCBI Taxonomy" id="2711"/>
    <lineage>
        <taxon>Eukaryota</taxon>
        <taxon>Viridiplantae</taxon>
        <taxon>Streptophyta</taxon>
        <taxon>Embryophyta</taxon>
        <taxon>Tracheophyta</taxon>
        <taxon>Spermatophyta</taxon>
        <taxon>Magnoliopsida</taxon>
        <taxon>eudicotyledons</taxon>
        <taxon>Gunneridae</taxon>
        <taxon>Pentapetalae</taxon>
        <taxon>rosids</taxon>
        <taxon>malvids</taxon>
        <taxon>Sapindales</taxon>
        <taxon>Rutaceae</taxon>
        <taxon>Aurantioideae</taxon>
        <taxon>Citrus</taxon>
    </lineage>
</organism>
<keyword id="KW-0067">ATP-binding</keyword>
<keyword id="KW-0150">Chloroplast</keyword>
<keyword id="KW-0275">Fatty acid biosynthesis</keyword>
<keyword id="KW-0276">Fatty acid metabolism</keyword>
<keyword id="KW-0444">Lipid biosynthesis</keyword>
<keyword id="KW-0443">Lipid metabolism</keyword>
<keyword id="KW-0479">Metal-binding</keyword>
<keyword id="KW-0547">Nucleotide-binding</keyword>
<keyword id="KW-0934">Plastid</keyword>
<keyword id="KW-0808">Transferase</keyword>
<keyword id="KW-0862">Zinc</keyword>
<keyword id="KW-0863">Zinc-finger</keyword>
<evidence type="ECO:0000250" key="1"/>
<evidence type="ECO:0000255" key="2">
    <source>
        <dbReference type="HAMAP-Rule" id="MF_01395"/>
    </source>
</evidence>
<evidence type="ECO:0000255" key="3">
    <source>
        <dbReference type="PROSITE-ProRule" id="PRU01136"/>
    </source>
</evidence>
<evidence type="ECO:0000256" key="4">
    <source>
        <dbReference type="SAM" id="MobiDB-lite"/>
    </source>
</evidence>
<protein>
    <recommendedName>
        <fullName evidence="2">Acetyl-coenzyme A carboxylase carboxyl transferase subunit beta, chloroplastic</fullName>
        <shortName evidence="2">ACCase subunit beta</shortName>
        <shortName evidence="2">Acetyl-CoA carboxylase carboxyltransferase subunit beta</shortName>
        <ecNumber evidence="2">2.1.3.15</ecNumber>
    </recommendedName>
</protein>
<name>ACCD_CITSI</name>
<sequence length="492" mass="55372">MKKWWFNSMLSKGKGELEYRCWLSKSMESPGPIKNPSVSEELIRNDKNKNIHSSSDSDSSSYSKLAGVRDIHNFISDDTFFVKDSNRDSYSIYFDIENQILELDNAHSFLSELESSFYSFRNYSSRNNGSKSADPDSDRYMYDTKSSWNNHIHNCLDSYLHSQICIDSHVLSSSDNYSASYIYNFICSESESSNIQSSTNGSDLTISESSNESESSNESDVTQKYRHLWVQCENCYGLNYKKFLKSKMYLCEQCGYHLKMISSDRIDLLVDPGTWDPMDDDMVSIDPIEFDSEEEPYKNRIDSYQSKTGLTEAVQTGTGQLNGIPIAIGVMDFQFMGGSMGSVVGEKITRLIEYAANKFLPLLLVCASGGARMQEGSLSLMQMAKISSALYDYQSNKKLFYVSILTSPTTGGVTASFGMLGDIIIAEPNAYIAFAGKRVIEQTLNKTVPEGSQEAEYLFDKGLFDPIVPRNPLKGVLSELFLFHGRFPLNQN</sequence>
<reference key="1">
    <citation type="journal article" date="2006" name="BMC Plant Biol.">
        <title>The complete chloroplast genome sequence of Citrus sinensis (L.) Osbeck var 'Ridge Pineapple': organization and phylogenetic relationships to other angiosperms.</title>
        <authorList>
            <person name="Bausher M.G."/>
            <person name="Singh N.D."/>
            <person name="Lee S.-B."/>
            <person name="Jansen R.K."/>
            <person name="Daniell H."/>
        </authorList>
    </citation>
    <scope>NUCLEOTIDE SEQUENCE [LARGE SCALE GENOMIC DNA]</scope>
    <source>
        <strain>cv. Osbeck var. Ridge Pineapple</strain>
    </source>
</reference>
<accession>Q09MG9</accession>
<comment type="function">
    <text evidence="2">Component of the acetyl coenzyme A carboxylase (ACC) complex. Biotin carboxylase (BC) catalyzes the carboxylation of biotin on its carrier protein (BCCP) and then the CO(2) group is transferred by the transcarboxylase to acetyl-CoA to form malonyl-CoA.</text>
</comment>
<comment type="catalytic activity">
    <reaction evidence="2">
        <text>N(6)-carboxybiotinyl-L-lysyl-[protein] + acetyl-CoA = N(6)-biotinyl-L-lysyl-[protein] + malonyl-CoA</text>
        <dbReference type="Rhea" id="RHEA:54728"/>
        <dbReference type="Rhea" id="RHEA-COMP:10505"/>
        <dbReference type="Rhea" id="RHEA-COMP:10506"/>
        <dbReference type="ChEBI" id="CHEBI:57288"/>
        <dbReference type="ChEBI" id="CHEBI:57384"/>
        <dbReference type="ChEBI" id="CHEBI:83144"/>
        <dbReference type="ChEBI" id="CHEBI:83145"/>
        <dbReference type="EC" id="2.1.3.15"/>
    </reaction>
</comment>
<comment type="cofactor">
    <cofactor evidence="2">
        <name>Zn(2+)</name>
        <dbReference type="ChEBI" id="CHEBI:29105"/>
    </cofactor>
    <text evidence="2">Binds 1 zinc ion per subunit.</text>
</comment>
<comment type="pathway">
    <text evidence="2">Lipid metabolism; malonyl-CoA biosynthesis; malonyl-CoA from acetyl-CoA: step 1/1.</text>
</comment>
<comment type="subunit">
    <text evidence="1">Acetyl-CoA carboxylase is a heterohexamer composed of biotin carboxyl carrier protein, biotin carboxylase and 2 subunits each of ACCase subunit alpha and ACCase plastid-coded subunit beta (accD).</text>
</comment>
<comment type="subcellular location">
    <subcellularLocation>
        <location evidence="2">Plastid</location>
        <location evidence="2">Chloroplast stroma</location>
    </subcellularLocation>
</comment>
<comment type="similarity">
    <text evidence="2">Belongs to the AccD/PCCB family.</text>
</comment>